<name>CX7A1_BOVIN</name>
<proteinExistence type="evidence at protein level"/>
<reference key="1">
    <citation type="journal article" date="1991" name="J. Biol. Chem.">
        <title>Cytochrome c oxidase subunit VIIa isoforms. Characterization and expression of bovine cDNAs.</title>
        <authorList>
            <person name="Seelan R.S."/>
            <person name="Grossman L.I."/>
        </authorList>
    </citation>
    <scope>NUCLEOTIDE SEQUENCE [MRNA]</scope>
    <source>
        <tissue>Heart</tissue>
    </source>
</reference>
<reference key="2">
    <citation type="journal article" date="1992" name="Biochemistry">
        <title>Structure and organization of the heart isoform gene for bovine cytochrome c oxidase subunit VIIa.</title>
        <authorList>
            <person name="Seelan R.S."/>
            <person name="Grossman L.I."/>
        </authorList>
    </citation>
    <scope>NUCLEOTIDE SEQUENCE [GENOMIC DNA]</scope>
    <source>
        <tissue>Heart</tissue>
    </source>
</reference>
<reference key="3">
    <citation type="submission" date="2006-04" db="EMBL/GenBank/DDBJ databases">
        <authorList>
            <consortium name="NIH - Mammalian Gene Collection (MGC) project"/>
        </authorList>
    </citation>
    <scope>NUCLEOTIDE SEQUENCE [LARGE SCALE MRNA]</scope>
    <source>
        <strain>Hereford</strain>
        <tissue>Fetal cerebellum</tissue>
    </source>
</reference>
<reference key="4">
    <citation type="journal article" date="1986" name="Biol. Chem. Hoppe-Seyler">
        <title>Studies on cytochrome-c oxidase, XIII. Amino-acid sequence of the small membrane polypeptide VIIIc from bovine heart respiratory complex IV.</title>
        <authorList>
            <person name="Meinecke L."/>
            <person name="Buse G."/>
        </authorList>
    </citation>
    <scope>PROTEIN SEQUENCE OF 22-80</scope>
    <source>
        <tissue>Heart</tissue>
    </source>
</reference>
<reference key="5">
    <citation type="journal article" date="2016" name="J. Biol. Chem.">
        <title>Purification of active respiratory supercomplex from bovine heart mitochondria enables functional studies.</title>
        <authorList>
            <person name="Shinzawa-Itoh K."/>
            <person name="Shimomura H."/>
            <person name="Yanagisawa S."/>
            <person name="Shimada S."/>
            <person name="Takahashi R."/>
            <person name="Oosaki M."/>
            <person name="Ogura T."/>
            <person name="Tsukihara T."/>
        </authorList>
    </citation>
    <scope>SUBUNIT</scope>
</reference>
<reference key="6">
    <citation type="journal article" date="1996" name="Science">
        <title>The whole structure of the 13-subunit oxidized cytochrome c oxidase at 2.8 A.</title>
        <authorList>
            <person name="Tsukihara T."/>
            <person name="Aoyama H."/>
            <person name="Yamashita E."/>
            <person name="Tomizaki T."/>
            <person name="Yamaguchi H."/>
            <person name="Shinzawa-Itoh K."/>
            <person name="Nakashima R."/>
            <person name="Yaono R."/>
            <person name="Yoshikawa S."/>
        </authorList>
    </citation>
    <scope>X-RAY CRYSTALLOGRAPHY (2.8 ANGSTROMS)</scope>
    <scope>FUNCTION</scope>
    <scope>SUBUNIT</scope>
</reference>
<reference key="7">
    <citation type="journal article" date="1999" name="Acta Crystallogr. D">
        <title>Structure analysis of bovine heart cytochrome c oxidase at 2.8 A resolution.</title>
        <authorList>
            <person name="Tomizaki T."/>
            <person name="Yamashita E."/>
            <person name="Yamaguchi H."/>
            <person name="Aoyama H."/>
            <person name="Tsukihara T."/>
            <person name="Shinzawa-Itoh K."/>
            <person name="Nakashima R."/>
            <person name="Yaono R."/>
            <person name="Yoshikawa S."/>
        </authorList>
    </citation>
    <scope>X-RAY CRYSTALLOGRAPHY (2.8 ANGSTROMS)</scope>
    <scope>FUNCTION</scope>
    <scope>SUBUNIT</scope>
    <source>
        <tissue>Heart</tissue>
    </source>
</reference>
<reference key="8">
    <citation type="journal article" date="2000" name="Acta Crystallogr. D">
        <title>X-ray structure of azide-bound fully oxidized cytochrome c oxidase from bovine heart at 2.9 A resolution.</title>
        <authorList>
            <person name="Fei M.J."/>
            <person name="Yamashita E."/>
            <person name="Inoue N."/>
            <person name="Yao M."/>
            <person name="Yamaguchi H."/>
            <person name="Tsukihara T."/>
            <person name="Shinzawa-Itoh K."/>
            <person name="Nakashima R."/>
            <person name="Yoshikawa S."/>
        </authorList>
    </citation>
    <scope>X-RAY CRYSTALLOGRAPHY (2.9 ANGSTROMS)</scope>
    <scope>FUNCTION</scope>
    <scope>SUBUNIT</scope>
    <source>
        <tissue>Heart</tissue>
    </source>
</reference>
<reference key="9">
    <citation type="journal article" date="2010" name="Proc. Natl. Acad. Sci. U.S.A.">
        <title>Bovine cytochrome c oxidase structures enable O2 reduction with minimization of reactive oxygens and provide a proton-pumping gate.</title>
        <authorList>
            <person name="Muramoto K."/>
            <person name="Ohta K."/>
            <person name="Shinzawa-Itoh K."/>
            <person name="Kanda K."/>
            <person name="Taniguchi M."/>
            <person name="Nabekura H."/>
            <person name="Yamashita E."/>
            <person name="Tsukihara T."/>
            <person name="Yoshikawa S."/>
        </authorList>
    </citation>
    <scope>X-RAY CRYSTALLOGRAPHY (1.80 ANGSTROMS)</scope>
    <scope>FUNCTION</scope>
    <scope>SUBUNIT</scope>
</reference>
<reference key="10">
    <citation type="journal article" date="2016" name="Elife">
        <title>Functional asymmetry and electron flow in the bovine respirasome.</title>
        <authorList>
            <person name="Sousa J.S."/>
            <person name="Mills D.J."/>
            <person name="Vonck J."/>
            <person name="Kuehlbrandt W."/>
        </authorList>
    </citation>
    <scope>STRUCTURE BY ELECTRON MICROSCOPY (9.10 ANGSTROMS)</scope>
    <scope>FUNCTION</scope>
    <scope>SUBUNIT</scope>
</reference>
<reference key="11">
    <citation type="journal article" date="2016" name="J. Biol. Chem.">
        <title>The Mg2+-containing water cluster of mammalian cytochrome c oxidase collects four pumping proton equivalents in each catalytic cycle.</title>
        <authorList>
            <person name="Yano N."/>
            <person name="Muramoto K."/>
            <person name="Shimada A."/>
            <person name="Takemura S."/>
            <person name="Baba J."/>
            <person name="Fujisawa H."/>
            <person name="Mochizuki M."/>
            <person name="Shinzawa-Itoh K."/>
            <person name="Yamashita E."/>
            <person name="Tsukihara T."/>
            <person name="Yoshikawa S."/>
        </authorList>
    </citation>
    <scope>X-RAY CRYSTALLOGRAPHY (1.50 ANGSTROMS)</scope>
    <scope>FUNCTION</scope>
    <scope>SUBUNIT</scope>
</reference>
<reference key="12">
    <citation type="journal article" date="2019" name="Proc. Natl. Acad. Sci. U.S.A.">
        <title>Monomeric structure of an active form of bovine cytochrome c oxidase.</title>
        <authorList>
            <person name="Shinzawa-Itoh K."/>
            <person name="Sugimura T."/>
            <person name="Misaki T."/>
            <person name="Tadehara Y."/>
            <person name="Yamamoto S."/>
            <person name="Hanada M."/>
            <person name="Yano N."/>
            <person name="Nakagawa T."/>
            <person name="Uene S."/>
            <person name="Yamada T."/>
            <person name="Aoyama H."/>
            <person name="Yamashita E."/>
            <person name="Tsukihara T."/>
            <person name="Yoshikawa S."/>
            <person name="Muramoto K."/>
        </authorList>
    </citation>
    <scope>X-RAY CRYSTALLOGRAPHY (1.85 ANGSTROMS)</scope>
    <scope>FUNCTION</scope>
    <scope>SUBUNIT</scope>
</reference>
<evidence type="ECO:0000250" key="1">
    <source>
        <dbReference type="UniProtKB" id="P10174"/>
    </source>
</evidence>
<evidence type="ECO:0000250" key="2">
    <source>
        <dbReference type="UniProtKB" id="P56392"/>
    </source>
</evidence>
<evidence type="ECO:0000250" key="3">
    <source>
        <dbReference type="UniProtKB" id="Q08CE7"/>
    </source>
</evidence>
<evidence type="ECO:0000269" key="4">
    <source>
    </source>
</evidence>
<evidence type="ECO:0000269" key="5">
    <source>
    </source>
</evidence>
<evidence type="ECO:0000269" key="6">
    <source>
    </source>
</evidence>
<evidence type="ECO:0000269" key="7">
    <source>
    </source>
</evidence>
<evidence type="ECO:0000269" key="8">
    <source>
    </source>
</evidence>
<evidence type="ECO:0000269" key="9">
    <source>
    </source>
</evidence>
<evidence type="ECO:0000269" key="10">
    <source>
    </source>
</evidence>
<evidence type="ECO:0000269" key="11">
    <source>
    </source>
</evidence>
<evidence type="ECO:0000269" key="12">
    <source>
    </source>
</evidence>
<evidence type="ECO:0000305" key="13"/>
<evidence type="ECO:0007829" key="14">
    <source>
        <dbReference type="PDB" id="7COH"/>
    </source>
</evidence>
<comment type="function">
    <text evidence="1 2 3 4 5 6 8 9 11 12">Component of the mitochondrial respiratory complex IV (CIV, also named cytochrome c oxidase complex), the last enzyme in the mitochondrial electron transport chain which drives oxidative phosphorylation (PubMed:10089392, PubMed:10771420, PubMed:20385840, PubMed:27605664, PubMed:27830641, PubMed:31533957, PubMed:8638158). The CIV complex is the component of the respiratory chain that catalyzes the reduction of oxygen to water (By similarity). Acts as an assembly factor that specifically drives the homodimerization of CIV complexes, mediating the formation of mitochondrial respiratory supercomplexes (respirasomes) containing two CIV: supercomplxes with two molecules of CIV show improved activity (By similarity). Despite being highly expressed in brown adipose tissue, not required for thermogenesis (By similarity).</text>
</comment>
<comment type="pathway">
    <text evidence="2">Energy metabolism; oxidative phosphorylation.</text>
</comment>
<comment type="subunit">
    <text evidence="4 5 6 7 8 9 11 12">Component of the complex IV (CIV, cytochrome c oxidase), a multisubunit enzyme composed of 14 subunits (PubMed:8638158, PubMed:10089392, PubMed:10771420, PubMed:20385840, PubMed:27830641, PubMed:27605664, PubMed:31533957). The complex is composed of a catalytic core of 3 subunits MT-CO1, MT-CO2 and MT-CO3, encoded in the mitochondrial DNA, and 11 supernumerary subunits COX4I1 (or COX4I2), COX5A, COX5B, COX6A2 (or COX6A1), COX6B1 (or COX6B2), COX6C, COX7A1 (or COX7A2), COX7B, COX7C, COX8B and NDUFA4, which are encoded in the nuclear genome (PubMed:8638158, PubMed:10089392, PubMed:10771420, PubMed:20385840, PubMed:27830641, PubMed:27605664, PubMed:31533957). The complex exists as a monomer or a dimer and forms supercomplexes (SCs) in the inner mitochondrial membrane with NADH-ubiquinone oxidoreductase (complex I, CI) and ubiquinol-cytochrome c oxidoreductase (cytochrome b-c1 complex, complex III, CIII), resulting in different assemblies (supercomplex SCI(1)III(2)IV(1) and megacomplex MCI(2)III(2)IV(2)) (PubMed:26698328, PubMed:27830641).</text>
</comment>
<comment type="subcellular location">
    <subcellularLocation>
        <location evidence="8 11">Mitochondrion inner membrane</location>
        <topology evidence="8 11">Single-pass membrane protein</topology>
    </subcellularLocation>
</comment>
<comment type="similarity">
    <text evidence="13">Belongs to the cytochrome c oxidase VIIa family.</text>
</comment>
<keyword id="KW-0002">3D-structure</keyword>
<keyword id="KW-0903">Direct protein sequencing</keyword>
<keyword id="KW-0472">Membrane</keyword>
<keyword id="KW-0496">Mitochondrion</keyword>
<keyword id="KW-0999">Mitochondrion inner membrane</keyword>
<keyword id="KW-0560">Oxidoreductase</keyword>
<keyword id="KW-1185">Reference proteome</keyword>
<keyword id="KW-0809">Transit peptide</keyword>
<keyword id="KW-0812">Transmembrane</keyword>
<keyword id="KW-1133">Transmembrane helix</keyword>
<organism>
    <name type="scientific">Bos taurus</name>
    <name type="common">Bovine</name>
    <dbReference type="NCBI Taxonomy" id="9913"/>
    <lineage>
        <taxon>Eukaryota</taxon>
        <taxon>Metazoa</taxon>
        <taxon>Chordata</taxon>
        <taxon>Craniata</taxon>
        <taxon>Vertebrata</taxon>
        <taxon>Euteleostomi</taxon>
        <taxon>Mammalia</taxon>
        <taxon>Eutheria</taxon>
        <taxon>Laurasiatheria</taxon>
        <taxon>Artiodactyla</taxon>
        <taxon>Ruminantia</taxon>
        <taxon>Pecora</taxon>
        <taxon>Bovidae</taxon>
        <taxon>Bovinae</taxon>
        <taxon>Bos</taxon>
    </lineage>
</organism>
<gene>
    <name type="primary">COX7A1</name>
    <name type="synonym">COX7A</name>
    <name type="synonym">COX7AH</name>
</gene>
<sequence>MRALRVSQALVRSFSSTARNRFENRVAEKQKLFQEDNGLPVHLKGGATDNILYRVTMTLCLGGTLYSLYCLGWASFPHKK</sequence>
<accession>P07470</accession>
<accession>A4FUH9</accession>
<dbReference type="EMBL" id="X56739">
    <property type="protein sequence ID" value="CAA40063.1"/>
    <property type="molecule type" value="mRNA"/>
</dbReference>
<dbReference type="EMBL" id="M83299">
    <property type="protein sequence ID" value="AAA30464.1"/>
    <property type="molecule type" value="Genomic_DNA"/>
</dbReference>
<dbReference type="EMBL" id="BC114907">
    <property type="protein sequence ID" value="AAI14908.1"/>
    <property type="molecule type" value="mRNA"/>
</dbReference>
<dbReference type="PIR" id="A41852">
    <property type="entry name" value="OSBO7A"/>
</dbReference>
<dbReference type="RefSeq" id="NP_788847.1">
    <property type="nucleotide sequence ID" value="NM_176674.2"/>
</dbReference>
<dbReference type="PDB" id="1OCC">
    <property type="method" value="X-ray"/>
    <property type="resolution" value="2.80 A"/>
    <property type="chains" value="J/W=22-80"/>
</dbReference>
<dbReference type="PDB" id="1OCO">
    <property type="method" value="X-ray"/>
    <property type="resolution" value="2.80 A"/>
    <property type="chains" value="J/W=22-80"/>
</dbReference>
<dbReference type="PDB" id="1OCR">
    <property type="method" value="X-ray"/>
    <property type="resolution" value="2.35 A"/>
    <property type="chains" value="J/W=22-80"/>
</dbReference>
<dbReference type="PDB" id="1OCZ">
    <property type="method" value="X-ray"/>
    <property type="resolution" value="2.90 A"/>
    <property type="chains" value="J/W=22-80"/>
</dbReference>
<dbReference type="PDB" id="1V54">
    <property type="method" value="X-ray"/>
    <property type="resolution" value="1.80 A"/>
    <property type="chains" value="J/W=22-80"/>
</dbReference>
<dbReference type="PDB" id="1V55">
    <property type="method" value="X-ray"/>
    <property type="resolution" value="1.90 A"/>
    <property type="chains" value="J/W=22-80"/>
</dbReference>
<dbReference type="PDB" id="2DYR">
    <property type="method" value="X-ray"/>
    <property type="resolution" value="1.80 A"/>
    <property type="chains" value="J/W=22-80"/>
</dbReference>
<dbReference type="PDB" id="2DYS">
    <property type="method" value="X-ray"/>
    <property type="resolution" value="2.20 A"/>
    <property type="chains" value="J/W=22-80"/>
</dbReference>
<dbReference type="PDB" id="2EIJ">
    <property type="method" value="X-ray"/>
    <property type="resolution" value="1.90 A"/>
    <property type="chains" value="J/W=22-80"/>
</dbReference>
<dbReference type="PDB" id="2EIK">
    <property type="method" value="X-ray"/>
    <property type="resolution" value="2.10 A"/>
    <property type="chains" value="J/W=22-80"/>
</dbReference>
<dbReference type="PDB" id="2EIL">
    <property type="method" value="X-ray"/>
    <property type="resolution" value="2.10 A"/>
    <property type="chains" value="J/W=22-80"/>
</dbReference>
<dbReference type="PDB" id="2EIM">
    <property type="method" value="X-ray"/>
    <property type="resolution" value="2.60 A"/>
    <property type="chains" value="J/W=22-80"/>
</dbReference>
<dbReference type="PDB" id="2EIN">
    <property type="method" value="X-ray"/>
    <property type="resolution" value="2.70 A"/>
    <property type="chains" value="J/W=22-80"/>
</dbReference>
<dbReference type="PDB" id="2OCC">
    <property type="method" value="X-ray"/>
    <property type="resolution" value="2.30 A"/>
    <property type="chains" value="J/W=22-80"/>
</dbReference>
<dbReference type="PDB" id="2Y69">
    <property type="method" value="X-ray"/>
    <property type="resolution" value="1.95 A"/>
    <property type="chains" value="J/W=1-80"/>
</dbReference>
<dbReference type="PDB" id="2YBB">
    <property type="method" value="EM"/>
    <property type="resolution" value="19.00 A"/>
    <property type="chains" value="U=22-80"/>
</dbReference>
<dbReference type="PDB" id="2ZXW">
    <property type="method" value="X-ray"/>
    <property type="resolution" value="2.50 A"/>
    <property type="chains" value="J/W=22-80"/>
</dbReference>
<dbReference type="PDB" id="3ABK">
    <property type="method" value="X-ray"/>
    <property type="resolution" value="2.00 A"/>
    <property type="chains" value="J/W=22-80"/>
</dbReference>
<dbReference type="PDB" id="3ABL">
    <property type="method" value="X-ray"/>
    <property type="resolution" value="2.10 A"/>
    <property type="chains" value="J/W=22-80"/>
</dbReference>
<dbReference type="PDB" id="3ABM">
    <property type="method" value="X-ray"/>
    <property type="resolution" value="1.95 A"/>
    <property type="chains" value="J/W=22-80"/>
</dbReference>
<dbReference type="PDB" id="3AG1">
    <property type="method" value="X-ray"/>
    <property type="resolution" value="2.20 A"/>
    <property type="chains" value="J/W=22-80"/>
</dbReference>
<dbReference type="PDB" id="3AG2">
    <property type="method" value="X-ray"/>
    <property type="resolution" value="1.80 A"/>
    <property type="chains" value="J/W=22-80"/>
</dbReference>
<dbReference type="PDB" id="3AG3">
    <property type="method" value="X-ray"/>
    <property type="resolution" value="1.80 A"/>
    <property type="chains" value="J/W=22-80"/>
</dbReference>
<dbReference type="PDB" id="3AG4">
    <property type="method" value="X-ray"/>
    <property type="resolution" value="2.05 A"/>
    <property type="chains" value="J/W=22-80"/>
</dbReference>
<dbReference type="PDB" id="3ASN">
    <property type="method" value="X-ray"/>
    <property type="resolution" value="3.00 A"/>
    <property type="chains" value="J/W=22-80"/>
</dbReference>
<dbReference type="PDB" id="3ASO">
    <property type="method" value="X-ray"/>
    <property type="resolution" value="2.30 A"/>
    <property type="chains" value="J/W=22-80"/>
</dbReference>
<dbReference type="PDB" id="3WG7">
    <property type="method" value="X-ray"/>
    <property type="resolution" value="1.90 A"/>
    <property type="chains" value="J/W=22-80"/>
</dbReference>
<dbReference type="PDB" id="3X2Q">
    <property type="method" value="X-ray"/>
    <property type="resolution" value="2.00 A"/>
    <property type="chains" value="J/W=22-80"/>
</dbReference>
<dbReference type="PDB" id="5B1A">
    <property type="method" value="X-ray"/>
    <property type="resolution" value="1.50 A"/>
    <property type="chains" value="J/W=22-80"/>
</dbReference>
<dbReference type="PDB" id="5B1B">
    <property type="method" value="X-ray"/>
    <property type="resolution" value="1.60 A"/>
    <property type="chains" value="J/W=22-80"/>
</dbReference>
<dbReference type="PDB" id="5B3S">
    <property type="method" value="X-ray"/>
    <property type="resolution" value="1.68 A"/>
    <property type="chains" value="J/W=22-80"/>
</dbReference>
<dbReference type="PDB" id="5GPN">
    <property type="method" value="EM"/>
    <property type="resolution" value="5.40 A"/>
    <property type="chains" value="7=22-80"/>
</dbReference>
<dbReference type="PDB" id="5IY5">
    <property type="method" value="X-ray"/>
    <property type="resolution" value="2.00 A"/>
    <property type="chains" value="J/W=22-79"/>
</dbReference>
<dbReference type="PDB" id="5LUF">
    <property type="method" value="EM"/>
    <property type="resolution" value="9.10 A"/>
    <property type="chains" value="7=22-80"/>
</dbReference>
<dbReference type="PDB" id="5W97">
    <property type="method" value="X-ray"/>
    <property type="resolution" value="2.30 A"/>
    <property type="chains" value="J/j=22-80"/>
</dbReference>
<dbReference type="PDB" id="5WAU">
    <property type="method" value="X-ray"/>
    <property type="resolution" value="1.95 A"/>
    <property type="chains" value="J/j=22-80"/>
</dbReference>
<dbReference type="PDB" id="5X19">
    <property type="method" value="X-ray"/>
    <property type="resolution" value="2.20 A"/>
    <property type="chains" value="J/W=22-80"/>
</dbReference>
<dbReference type="PDB" id="5X1B">
    <property type="method" value="X-ray"/>
    <property type="resolution" value="2.40 A"/>
    <property type="chains" value="J/W=22-80"/>
</dbReference>
<dbReference type="PDB" id="5X1F">
    <property type="method" value="X-ray"/>
    <property type="resolution" value="2.20 A"/>
    <property type="chains" value="J/W=22-80"/>
</dbReference>
<dbReference type="PDB" id="5XDQ">
    <property type="method" value="X-ray"/>
    <property type="resolution" value="1.77 A"/>
    <property type="chains" value="J/W=22-80"/>
</dbReference>
<dbReference type="PDB" id="5XDX">
    <property type="method" value="X-ray"/>
    <property type="resolution" value="1.99 A"/>
    <property type="chains" value="J/W=22-80"/>
</dbReference>
<dbReference type="PDB" id="5XTH">
    <property type="method" value="EM"/>
    <property type="resolution" value="3.90 A"/>
    <property type="chains" value="6=22-77"/>
</dbReference>
<dbReference type="PDB" id="5XTI">
    <property type="method" value="EM"/>
    <property type="resolution" value="17.40 A"/>
    <property type="chains" value="6/B6=22-77"/>
</dbReference>
<dbReference type="PDB" id="5Z84">
    <property type="method" value="X-ray"/>
    <property type="resolution" value="1.85 A"/>
    <property type="chains" value="J/W=22-80"/>
</dbReference>
<dbReference type="PDB" id="5Z85">
    <property type="method" value="X-ray"/>
    <property type="resolution" value="1.85 A"/>
    <property type="chains" value="J/W=22-80"/>
</dbReference>
<dbReference type="PDB" id="5Z86">
    <property type="method" value="X-ray"/>
    <property type="resolution" value="1.85 A"/>
    <property type="chains" value="J/W=22-80"/>
</dbReference>
<dbReference type="PDB" id="5ZCO">
    <property type="method" value="X-ray"/>
    <property type="resolution" value="1.90 A"/>
    <property type="chains" value="J/W=22-80"/>
</dbReference>
<dbReference type="PDB" id="5ZCP">
    <property type="method" value="X-ray"/>
    <property type="resolution" value="1.65 A"/>
    <property type="chains" value="J/W=22-80"/>
</dbReference>
<dbReference type="PDB" id="5ZCQ">
    <property type="method" value="X-ray"/>
    <property type="resolution" value="1.65 A"/>
    <property type="chains" value="J/W=22-80"/>
</dbReference>
<dbReference type="PDB" id="6J8M">
    <property type="method" value="X-ray"/>
    <property type="resolution" value="1.90 A"/>
    <property type="chains" value="J/W=22-80"/>
</dbReference>
<dbReference type="PDB" id="6JUW">
    <property type="method" value="X-ray"/>
    <property type="resolution" value="1.80 A"/>
    <property type="chains" value="J/W=22-79"/>
</dbReference>
<dbReference type="PDB" id="6JY3">
    <property type="method" value="X-ray"/>
    <property type="resolution" value="1.85 A"/>
    <property type="chains" value="J=22-80"/>
</dbReference>
<dbReference type="PDB" id="6JY4">
    <property type="method" value="X-ray"/>
    <property type="resolution" value="1.95 A"/>
    <property type="chains" value="J=22-80"/>
</dbReference>
<dbReference type="PDB" id="6NKN">
    <property type="method" value="X-ray"/>
    <property type="resolution" value="2.50 A"/>
    <property type="chains" value="J/W=22-80"/>
</dbReference>
<dbReference type="PDB" id="6NMF">
    <property type="method" value="X-ray"/>
    <property type="resolution" value="2.80 A"/>
    <property type="chains" value="J/W=22-80"/>
</dbReference>
<dbReference type="PDB" id="6NMP">
    <property type="method" value="X-ray"/>
    <property type="resolution" value="2.90 A"/>
    <property type="chains" value="J/W=22-80"/>
</dbReference>
<dbReference type="PDB" id="7COH">
    <property type="method" value="X-ray"/>
    <property type="resolution" value="1.30 A"/>
    <property type="chains" value="J/W=22-80"/>
</dbReference>
<dbReference type="PDB" id="7CP5">
    <property type="method" value="X-ray"/>
    <property type="resolution" value="1.76 A"/>
    <property type="chains" value="J/W=22-79"/>
</dbReference>
<dbReference type="PDB" id="7D5W">
    <property type="method" value="X-ray"/>
    <property type="resolution" value="1.84 A"/>
    <property type="chains" value="J/W=22-79"/>
</dbReference>
<dbReference type="PDB" id="7D5X">
    <property type="method" value="X-ray"/>
    <property type="resolution" value="1.74 A"/>
    <property type="chains" value="J/W=22-79"/>
</dbReference>
<dbReference type="PDB" id="7DGQ">
    <property type="method" value="EM"/>
    <property type="resolution" value="5.00 A"/>
    <property type="chains" value="B2=1-80"/>
</dbReference>
<dbReference type="PDB" id="7DGR">
    <property type="method" value="EM"/>
    <property type="resolution" value="4.60 A"/>
    <property type="chains" value="C3=1-80"/>
</dbReference>
<dbReference type="PDB" id="7DGS">
    <property type="method" value="EM"/>
    <property type="resolution" value="7.80 A"/>
    <property type="chains" value="B8=1-80"/>
</dbReference>
<dbReference type="PDB" id="7DKF">
    <property type="method" value="EM"/>
    <property type="resolution" value="8.30 A"/>
    <property type="chains" value="J3=1-80"/>
</dbReference>
<dbReference type="PDB" id="7EV7">
    <property type="method" value="X-ray"/>
    <property type="resolution" value="1.70 A"/>
    <property type="chains" value="J/W=22-80"/>
</dbReference>
<dbReference type="PDB" id="7THU">
    <property type="method" value="X-ray"/>
    <property type="resolution" value="1.93 A"/>
    <property type="chains" value="JJJ/WWW=22-80"/>
</dbReference>
<dbReference type="PDB" id="7TIE">
    <property type="method" value="X-ray"/>
    <property type="resolution" value="1.90 A"/>
    <property type="chains" value="JJJ/WWW=22-80"/>
</dbReference>
<dbReference type="PDB" id="7TIH">
    <property type="method" value="X-ray"/>
    <property type="resolution" value="2.35 A"/>
    <property type="chains" value="JJJ/WWW=22-80"/>
</dbReference>
<dbReference type="PDB" id="7TII">
    <property type="method" value="X-ray"/>
    <property type="resolution" value="2.45 A"/>
    <property type="chains" value="JJJ/WWW=22-80"/>
</dbReference>
<dbReference type="PDB" id="7VUW">
    <property type="method" value="X-ray"/>
    <property type="resolution" value="1.60 A"/>
    <property type="chains" value="J/W=22-79"/>
</dbReference>
<dbReference type="PDB" id="7VVR">
    <property type="method" value="X-ray"/>
    <property type="resolution" value="1.65 A"/>
    <property type="chains" value="J/W=22-79"/>
</dbReference>
<dbReference type="PDB" id="7W3E">
    <property type="method" value="X-ray"/>
    <property type="resolution" value="1.45 A"/>
    <property type="chains" value="J/W=22-78"/>
</dbReference>
<dbReference type="PDB" id="7XMA">
    <property type="method" value="X-ray"/>
    <property type="resolution" value="2.20 A"/>
    <property type="chains" value="J/W=22-80"/>
</dbReference>
<dbReference type="PDB" id="7XMB">
    <property type="method" value="X-ray"/>
    <property type="resolution" value="2.20 A"/>
    <property type="chains" value="J/W=22-80"/>
</dbReference>
<dbReference type="PDB" id="7Y44">
    <property type="method" value="X-ray"/>
    <property type="resolution" value="1.90 A"/>
    <property type="chains" value="J/W=22-80"/>
</dbReference>
<dbReference type="PDB" id="7YPY">
    <property type="method" value="X-ray"/>
    <property type="resolution" value="1.50 A"/>
    <property type="chains" value="J/W=22-80"/>
</dbReference>
<dbReference type="PDB" id="8D4T">
    <property type="method" value="EM"/>
    <property type="resolution" value="3.10 A"/>
    <property type="chains" value="W=22-76"/>
</dbReference>
<dbReference type="PDB" id="8GBT">
    <property type="method" value="X-ray"/>
    <property type="resolution" value="2.80 A"/>
    <property type="chains" value="J/W=22-80"/>
</dbReference>
<dbReference type="PDB" id="8GCQ">
    <property type="method" value="X-ray"/>
    <property type="resolution" value="2.38 A"/>
    <property type="chains" value="J/W=22-80"/>
</dbReference>
<dbReference type="PDB" id="8GVM">
    <property type="method" value="X-ray"/>
    <property type="resolution" value="1.85 A"/>
    <property type="chains" value="J/W=22-80"/>
</dbReference>
<dbReference type="PDB" id="8H8R">
    <property type="method" value="X-ray"/>
    <property type="resolution" value="1.70 A"/>
    <property type="chains" value="J/W=22-80"/>
</dbReference>
<dbReference type="PDB" id="8H8S">
    <property type="method" value="X-ray"/>
    <property type="resolution" value="1.70 A"/>
    <property type="chains" value="J/W=22-80"/>
</dbReference>
<dbReference type="PDB" id="8IJN">
    <property type="method" value="X-ray"/>
    <property type="resolution" value="1.80 A"/>
    <property type="chains" value="J/W=22-80"/>
</dbReference>
<dbReference type="PDBsum" id="1OCC"/>
<dbReference type="PDBsum" id="1OCO"/>
<dbReference type="PDBsum" id="1OCR"/>
<dbReference type="PDBsum" id="1OCZ"/>
<dbReference type="PDBsum" id="1V54"/>
<dbReference type="PDBsum" id="1V55"/>
<dbReference type="PDBsum" id="2DYR"/>
<dbReference type="PDBsum" id="2DYS"/>
<dbReference type="PDBsum" id="2EIJ"/>
<dbReference type="PDBsum" id="2EIK"/>
<dbReference type="PDBsum" id="2EIL"/>
<dbReference type="PDBsum" id="2EIM"/>
<dbReference type="PDBsum" id="2EIN"/>
<dbReference type="PDBsum" id="2OCC"/>
<dbReference type="PDBsum" id="2Y69"/>
<dbReference type="PDBsum" id="2YBB"/>
<dbReference type="PDBsum" id="2ZXW"/>
<dbReference type="PDBsum" id="3ABK"/>
<dbReference type="PDBsum" id="3ABL"/>
<dbReference type="PDBsum" id="3ABM"/>
<dbReference type="PDBsum" id="3AG1"/>
<dbReference type="PDBsum" id="3AG2"/>
<dbReference type="PDBsum" id="3AG3"/>
<dbReference type="PDBsum" id="3AG4"/>
<dbReference type="PDBsum" id="3ASN"/>
<dbReference type="PDBsum" id="3ASO"/>
<dbReference type="PDBsum" id="3WG7"/>
<dbReference type="PDBsum" id="3X2Q"/>
<dbReference type="PDBsum" id="5B1A"/>
<dbReference type="PDBsum" id="5B1B"/>
<dbReference type="PDBsum" id="5B3S"/>
<dbReference type="PDBsum" id="5GPN"/>
<dbReference type="PDBsum" id="5IY5"/>
<dbReference type="PDBsum" id="5LUF"/>
<dbReference type="PDBsum" id="5W97"/>
<dbReference type="PDBsum" id="5WAU"/>
<dbReference type="PDBsum" id="5X19"/>
<dbReference type="PDBsum" id="5X1B"/>
<dbReference type="PDBsum" id="5X1F"/>
<dbReference type="PDBsum" id="5XDQ"/>
<dbReference type="PDBsum" id="5XDX"/>
<dbReference type="PDBsum" id="5XTH"/>
<dbReference type="PDBsum" id="5XTI"/>
<dbReference type="PDBsum" id="5Z84"/>
<dbReference type="PDBsum" id="5Z85"/>
<dbReference type="PDBsum" id="5Z86"/>
<dbReference type="PDBsum" id="5ZCO"/>
<dbReference type="PDBsum" id="5ZCP"/>
<dbReference type="PDBsum" id="5ZCQ"/>
<dbReference type="PDBsum" id="6J8M"/>
<dbReference type="PDBsum" id="6JUW"/>
<dbReference type="PDBsum" id="6JY3"/>
<dbReference type="PDBsum" id="6JY4"/>
<dbReference type="PDBsum" id="6NKN"/>
<dbReference type="PDBsum" id="6NMF"/>
<dbReference type="PDBsum" id="6NMP"/>
<dbReference type="PDBsum" id="7COH"/>
<dbReference type="PDBsum" id="7CP5"/>
<dbReference type="PDBsum" id="7D5W"/>
<dbReference type="PDBsum" id="7D5X"/>
<dbReference type="PDBsum" id="7DGQ"/>
<dbReference type="PDBsum" id="7DGR"/>
<dbReference type="PDBsum" id="7DGS"/>
<dbReference type="PDBsum" id="7DKF"/>
<dbReference type="PDBsum" id="7EV7"/>
<dbReference type="PDBsum" id="7THU"/>
<dbReference type="PDBsum" id="7TIE"/>
<dbReference type="PDBsum" id="7TIH"/>
<dbReference type="PDBsum" id="7TII"/>
<dbReference type="PDBsum" id="7VUW"/>
<dbReference type="PDBsum" id="7VVR"/>
<dbReference type="PDBsum" id="7W3E"/>
<dbReference type="PDBsum" id="7XMA"/>
<dbReference type="PDBsum" id="7XMB"/>
<dbReference type="PDBsum" id="7Y44"/>
<dbReference type="PDBsum" id="7YPY"/>
<dbReference type="PDBsum" id="8D4T"/>
<dbReference type="PDBsum" id="8GBT"/>
<dbReference type="PDBsum" id="8GCQ"/>
<dbReference type="PDBsum" id="8GVM"/>
<dbReference type="PDBsum" id="8H8R"/>
<dbReference type="PDBsum" id="8H8S"/>
<dbReference type="PDBsum" id="8IJN"/>
<dbReference type="EMDB" id="EMD-27196"/>
<dbReference type="EMDB" id="EMD-30673"/>
<dbReference type="EMDB" id="EMD-30674"/>
<dbReference type="EMDB" id="EMD-30675"/>
<dbReference type="EMDB" id="EMD-30706"/>
<dbReference type="EMDB" id="EMD-4107"/>
<dbReference type="EMDB" id="EMD-9534"/>
<dbReference type="SMR" id="P07470"/>
<dbReference type="CORUM" id="P07470"/>
<dbReference type="DIP" id="DIP-38984N"/>
<dbReference type="FunCoup" id="P07470">
    <property type="interactions" value="190"/>
</dbReference>
<dbReference type="IntAct" id="P07470">
    <property type="interactions" value="3"/>
</dbReference>
<dbReference type="STRING" id="9913.ENSBTAP00000019808"/>
<dbReference type="PaxDb" id="9913-ENSBTAP00000019808"/>
<dbReference type="GeneID" id="338086"/>
<dbReference type="KEGG" id="bta:338086"/>
<dbReference type="CTD" id="1346"/>
<dbReference type="eggNOG" id="ENOG502SBK9">
    <property type="taxonomic scope" value="Eukaryota"/>
</dbReference>
<dbReference type="HOGENOM" id="CLU_173437_1_0_1"/>
<dbReference type="InParanoid" id="P07470"/>
<dbReference type="OrthoDB" id="5966508at2759"/>
<dbReference type="TreeFam" id="TF105067"/>
<dbReference type="BRENDA" id="7.1.1.9">
    <property type="organism ID" value="908"/>
</dbReference>
<dbReference type="UniPathway" id="UPA00705"/>
<dbReference type="EvolutionaryTrace" id="P07470"/>
<dbReference type="Proteomes" id="UP000009136">
    <property type="component" value="Unplaced"/>
</dbReference>
<dbReference type="GO" id="GO:0005743">
    <property type="term" value="C:mitochondrial inner membrane"/>
    <property type="evidence" value="ECO:0007669"/>
    <property type="project" value="UniProtKB-SubCell"/>
</dbReference>
<dbReference type="GO" id="GO:0005739">
    <property type="term" value="C:mitochondrion"/>
    <property type="evidence" value="ECO:0000250"/>
    <property type="project" value="AgBase"/>
</dbReference>
<dbReference type="GO" id="GO:0098803">
    <property type="term" value="C:respiratory chain complex"/>
    <property type="evidence" value="ECO:0000318"/>
    <property type="project" value="GO_Central"/>
</dbReference>
<dbReference type="GO" id="GO:0045277">
    <property type="term" value="C:respiratory chain complex IV"/>
    <property type="evidence" value="ECO:0000314"/>
    <property type="project" value="UniProtKB"/>
</dbReference>
<dbReference type="GO" id="GO:0016491">
    <property type="term" value="F:oxidoreductase activity"/>
    <property type="evidence" value="ECO:0007669"/>
    <property type="project" value="UniProtKB-KW"/>
</dbReference>
<dbReference type="GO" id="GO:0006123">
    <property type="term" value="P:mitochondrial electron transport, cytochrome c to oxygen"/>
    <property type="evidence" value="ECO:0007669"/>
    <property type="project" value="InterPro"/>
</dbReference>
<dbReference type="GO" id="GO:0097250">
    <property type="term" value="P:mitochondrial respirasome assembly"/>
    <property type="evidence" value="ECO:0000250"/>
    <property type="project" value="UniProtKB"/>
</dbReference>
<dbReference type="CDD" id="cd00928">
    <property type="entry name" value="Cyt_c_Oxidase_VIIa"/>
    <property type="match status" value="1"/>
</dbReference>
<dbReference type="FunFam" id="4.10.91.10:FF:000001">
    <property type="entry name" value="Cytochrome c oxidase subunit 7A1, mitochondrial"/>
    <property type="match status" value="1"/>
</dbReference>
<dbReference type="Gene3D" id="4.10.91.10">
    <property type="entry name" value="Cytochrome c oxidase, subunit VIIa"/>
    <property type="match status" value="1"/>
</dbReference>
<dbReference type="InterPro" id="IPR039297">
    <property type="entry name" value="COX7a"/>
</dbReference>
<dbReference type="InterPro" id="IPR036539">
    <property type="entry name" value="Cyt_c_oxidase_su7a_sf"/>
</dbReference>
<dbReference type="InterPro" id="IPR003177">
    <property type="entry name" value="Cytc_oxidase_su7a_met"/>
</dbReference>
<dbReference type="PANTHER" id="PTHR10510">
    <property type="entry name" value="CYTOCHROME C OXIDASE POLYPEPTIDE 7A"/>
    <property type="match status" value="1"/>
</dbReference>
<dbReference type="PANTHER" id="PTHR10510:SF5">
    <property type="entry name" value="CYTOCHROME C OXIDASE SUBUNIT 7A1, MITOCHONDRIAL"/>
    <property type="match status" value="1"/>
</dbReference>
<dbReference type="Pfam" id="PF02238">
    <property type="entry name" value="COX7a"/>
    <property type="match status" value="1"/>
</dbReference>
<dbReference type="SUPFAM" id="SSF81419">
    <property type="entry name" value="Mitochondrial cytochrome c oxidase subunit VIIa"/>
    <property type="match status" value="1"/>
</dbReference>
<protein>
    <recommendedName>
        <fullName>Cytochrome c oxidase subunit 7A1, mitochondrial</fullName>
    </recommendedName>
    <alternativeName>
        <fullName>Cytochrome c oxidase subunit VIIIc</fullName>
        <shortName>VIIIC</shortName>
    </alternativeName>
    <alternativeName>
        <fullName>Cytochrome c oxidase subunit VIIa-heart</fullName>
        <shortName>Cytochrome c oxidase subunit VIIa-H</shortName>
    </alternativeName>
    <alternativeName>
        <fullName>Cytochrome c oxidase subunit VIIa-muscle</fullName>
        <shortName>Cytochrome c oxidase subunit VIIa-M</shortName>
    </alternativeName>
</protein>
<feature type="transit peptide" description="Mitochondrion" evidence="10">
    <location>
        <begin position="1"/>
        <end position="21"/>
    </location>
</feature>
<feature type="chain" id="PRO_0000006148" description="Cytochrome c oxidase subunit 7A1, mitochondrial">
    <location>
        <begin position="22"/>
        <end position="80"/>
    </location>
</feature>
<feature type="topological domain" description="Mitochondrial matrix" evidence="8">
    <location>
        <begin position="22"/>
        <end position="46"/>
    </location>
</feature>
<feature type="transmembrane region" description="Helical" evidence="8">
    <location>
        <begin position="47"/>
        <end position="75"/>
    </location>
</feature>
<feature type="topological domain" description="Mitochondrial intermembrane" evidence="8">
    <location>
        <begin position="76"/>
        <end position="80"/>
    </location>
</feature>
<feature type="sequence conflict" description="In Ref. 4; AA sequence." evidence="13" ref="4">
    <original>W</original>
    <variation>H</variation>
    <location>
        <position position="73"/>
    </location>
</feature>
<feature type="sequence conflict" description="In Ref. 4; AA sequence." evidence="13" ref="4">
    <location>
        <begin position="76"/>
        <end position="78"/>
    </location>
</feature>
<feature type="helix" evidence="14">
    <location>
        <begin position="26"/>
        <end position="34"/>
    </location>
</feature>
<feature type="helix" evidence="14">
    <location>
        <begin position="41"/>
        <end position="43"/>
    </location>
</feature>
<feature type="helix" evidence="14">
    <location>
        <begin position="47"/>
        <end position="74"/>
    </location>
</feature>